<protein>
    <recommendedName>
        <fullName evidence="2">Elongation factor Tu</fullName>
        <shortName evidence="2">EF-Tu</shortName>
        <ecNumber evidence="2">3.6.5.3</ecNumber>
    </recommendedName>
</protein>
<proteinExistence type="inferred from homology"/>
<comment type="function">
    <text evidence="2">GTP hydrolase that promotes the GTP-dependent binding of aminoacyl-tRNA to the A-site of ribosomes during protein biosynthesis.</text>
</comment>
<comment type="catalytic activity">
    <reaction evidence="2">
        <text>GTP + H2O = GDP + phosphate + H(+)</text>
        <dbReference type="Rhea" id="RHEA:19669"/>
        <dbReference type="ChEBI" id="CHEBI:15377"/>
        <dbReference type="ChEBI" id="CHEBI:15378"/>
        <dbReference type="ChEBI" id="CHEBI:37565"/>
        <dbReference type="ChEBI" id="CHEBI:43474"/>
        <dbReference type="ChEBI" id="CHEBI:58189"/>
        <dbReference type="EC" id="3.6.5.3"/>
    </reaction>
    <physiologicalReaction direction="left-to-right" evidence="2">
        <dbReference type="Rhea" id="RHEA:19670"/>
    </physiologicalReaction>
</comment>
<comment type="subunit">
    <text evidence="2">Monomer.</text>
</comment>
<comment type="subcellular location">
    <subcellularLocation>
        <location evidence="2">Cytoplasm</location>
    </subcellularLocation>
</comment>
<comment type="similarity">
    <text evidence="2">Belongs to the TRAFAC class translation factor GTPase superfamily. Classic translation factor GTPase family. EF-Tu/EF-1A subfamily.</text>
</comment>
<sequence>MAKEHFNRSKPHVNVGTIGHVDHGKTTLTAAITTVLAKRGLSELRSFDSIDNAPEEKERGITINTSHVEYQTANRHYAHVDCPGHADYVKNMVAGAAQMDGAIIVVAATDGPMPQTREHILLARQVNVPRLVVFMNKCDMVDDEEMLELVEMDMRELLSFYDFDGDNTPIIRGSALGALNGEPQWEDKVMELMEAVDNWVPLPERDIDKPFLMPVEDVFSITGRGTVATGRIETGIVKTGDEVQIIGLGAEGMKSVVTGVEMFRKILDEGQAGDNVGLLLRGIDKDQIKRGMVISHPGKITPHKRFKAEVYILKKEEGGRHTPFHNKYRPQFYIRTLDVTGEITLPEGTEMVMPGDNVTITVELIYPVACNVGLRFAIREGGRTVGAGQITELID</sequence>
<evidence type="ECO:0000250" key="1"/>
<evidence type="ECO:0000255" key="2">
    <source>
        <dbReference type="HAMAP-Rule" id="MF_00118"/>
    </source>
</evidence>
<name>EFTU_PORG3</name>
<organism>
    <name type="scientific">Porphyromonas gingivalis (strain ATCC 33277 / DSM 20709 / CIP 103683 / JCM 12257 / NCTC 11834 / 2561)</name>
    <dbReference type="NCBI Taxonomy" id="431947"/>
    <lineage>
        <taxon>Bacteria</taxon>
        <taxon>Pseudomonadati</taxon>
        <taxon>Bacteroidota</taxon>
        <taxon>Bacteroidia</taxon>
        <taxon>Bacteroidales</taxon>
        <taxon>Porphyromonadaceae</taxon>
        <taxon>Porphyromonas</taxon>
    </lineage>
</organism>
<feature type="chain" id="PRO_1000095086" description="Elongation factor Tu">
    <location>
        <begin position="1"/>
        <end position="395"/>
    </location>
</feature>
<feature type="domain" description="tr-type G">
    <location>
        <begin position="10"/>
        <end position="204"/>
    </location>
</feature>
<feature type="region of interest" description="G1" evidence="1">
    <location>
        <begin position="19"/>
        <end position="26"/>
    </location>
</feature>
<feature type="region of interest" description="G2" evidence="1">
    <location>
        <begin position="60"/>
        <end position="64"/>
    </location>
</feature>
<feature type="region of interest" description="G3" evidence="1">
    <location>
        <begin position="81"/>
        <end position="84"/>
    </location>
</feature>
<feature type="region of interest" description="G4" evidence="1">
    <location>
        <begin position="136"/>
        <end position="139"/>
    </location>
</feature>
<feature type="region of interest" description="G5" evidence="1">
    <location>
        <begin position="174"/>
        <end position="176"/>
    </location>
</feature>
<feature type="binding site" evidence="2">
    <location>
        <begin position="19"/>
        <end position="26"/>
    </location>
    <ligand>
        <name>GTP</name>
        <dbReference type="ChEBI" id="CHEBI:37565"/>
    </ligand>
</feature>
<feature type="binding site" evidence="2">
    <location>
        <position position="26"/>
    </location>
    <ligand>
        <name>Mg(2+)</name>
        <dbReference type="ChEBI" id="CHEBI:18420"/>
    </ligand>
</feature>
<feature type="binding site" evidence="2">
    <location>
        <begin position="81"/>
        <end position="85"/>
    </location>
    <ligand>
        <name>GTP</name>
        <dbReference type="ChEBI" id="CHEBI:37565"/>
    </ligand>
</feature>
<feature type="binding site" evidence="2">
    <location>
        <begin position="136"/>
        <end position="139"/>
    </location>
    <ligand>
        <name>GTP</name>
        <dbReference type="ChEBI" id="CHEBI:37565"/>
    </ligand>
</feature>
<reference key="1">
    <citation type="journal article" date="2008" name="DNA Res.">
        <title>Determination of the genome sequence of Porphyromonas gingivalis strain ATCC 33277 and genomic comparison with strain W83 revealed extensive genome rearrangements in P. gingivalis.</title>
        <authorList>
            <person name="Naito M."/>
            <person name="Hirakawa H."/>
            <person name="Yamashita A."/>
            <person name="Ohara N."/>
            <person name="Shoji M."/>
            <person name="Yukitake H."/>
            <person name="Nakayama K."/>
            <person name="Toh H."/>
            <person name="Yoshimura F."/>
            <person name="Kuhara S."/>
            <person name="Hattori M."/>
            <person name="Hayashi T."/>
            <person name="Nakayama K."/>
        </authorList>
    </citation>
    <scope>NUCLEOTIDE SEQUENCE [LARGE SCALE GENOMIC DNA]</scope>
    <source>
        <strain>ATCC 33277 / DSM 20709 / CIP 103683 / JCM 12257 / NCTC 11834 / 2561</strain>
    </source>
</reference>
<dbReference type="EC" id="3.6.5.3" evidence="2"/>
<dbReference type="EMBL" id="AP009380">
    <property type="protein sequence ID" value="BAG34097.1"/>
    <property type="molecule type" value="Genomic_DNA"/>
</dbReference>
<dbReference type="RefSeq" id="WP_012458382.1">
    <property type="nucleotide sequence ID" value="NC_010729.1"/>
</dbReference>
<dbReference type="SMR" id="B2RL52"/>
<dbReference type="GeneID" id="29256753"/>
<dbReference type="KEGG" id="pgn:PGN_1578"/>
<dbReference type="eggNOG" id="COG0050">
    <property type="taxonomic scope" value="Bacteria"/>
</dbReference>
<dbReference type="HOGENOM" id="CLU_007265_0_0_10"/>
<dbReference type="OrthoDB" id="9804504at2"/>
<dbReference type="BioCyc" id="PGIN431947:G1G2V-1779-MONOMER"/>
<dbReference type="Proteomes" id="UP000008842">
    <property type="component" value="Chromosome"/>
</dbReference>
<dbReference type="GO" id="GO:0005829">
    <property type="term" value="C:cytosol"/>
    <property type="evidence" value="ECO:0007669"/>
    <property type="project" value="TreeGrafter"/>
</dbReference>
<dbReference type="GO" id="GO:0005525">
    <property type="term" value="F:GTP binding"/>
    <property type="evidence" value="ECO:0007669"/>
    <property type="project" value="UniProtKB-UniRule"/>
</dbReference>
<dbReference type="GO" id="GO:0003924">
    <property type="term" value="F:GTPase activity"/>
    <property type="evidence" value="ECO:0007669"/>
    <property type="project" value="InterPro"/>
</dbReference>
<dbReference type="GO" id="GO:0003746">
    <property type="term" value="F:translation elongation factor activity"/>
    <property type="evidence" value="ECO:0007669"/>
    <property type="project" value="UniProtKB-UniRule"/>
</dbReference>
<dbReference type="CDD" id="cd01884">
    <property type="entry name" value="EF_Tu"/>
    <property type="match status" value="1"/>
</dbReference>
<dbReference type="CDD" id="cd03697">
    <property type="entry name" value="EFTU_II"/>
    <property type="match status" value="1"/>
</dbReference>
<dbReference type="CDD" id="cd03707">
    <property type="entry name" value="EFTU_III"/>
    <property type="match status" value="1"/>
</dbReference>
<dbReference type="FunFam" id="2.40.30.10:FF:000002">
    <property type="entry name" value="Elongation factor Tu"/>
    <property type="match status" value="1"/>
</dbReference>
<dbReference type="FunFam" id="3.40.50.300:FF:000003">
    <property type="entry name" value="Elongation factor Tu"/>
    <property type="match status" value="1"/>
</dbReference>
<dbReference type="FunFam" id="2.40.30.10:FF:000020">
    <property type="entry name" value="Translation elongation factor EF-1"/>
    <property type="match status" value="1"/>
</dbReference>
<dbReference type="Gene3D" id="3.40.50.300">
    <property type="entry name" value="P-loop containing nucleotide triphosphate hydrolases"/>
    <property type="match status" value="1"/>
</dbReference>
<dbReference type="Gene3D" id="2.40.30.10">
    <property type="entry name" value="Translation factors"/>
    <property type="match status" value="2"/>
</dbReference>
<dbReference type="HAMAP" id="MF_00118_B">
    <property type="entry name" value="EF_Tu_B"/>
    <property type="match status" value="1"/>
</dbReference>
<dbReference type="InterPro" id="IPR041709">
    <property type="entry name" value="EF-Tu_GTP-bd"/>
</dbReference>
<dbReference type="InterPro" id="IPR050055">
    <property type="entry name" value="EF-Tu_GTPase"/>
</dbReference>
<dbReference type="InterPro" id="IPR004161">
    <property type="entry name" value="EFTu-like_2"/>
</dbReference>
<dbReference type="InterPro" id="IPR033720">
    <property type="entry name" value="EFTU_2"/>
</dbReference>
<dbReference type="InterPro" id="IPR031157">
    <property type="entry name" value="G_TR_CS"/>
</dbReference>
<dbReference type="InterPro" id="IPR027417">
    <property type="entry name" value="P-loop_NTPase"/>
</dbReference>
<dbReference type="InterPro" id="IPR005225">
    <property type="entry name" value="Small_GTP-bd"/>
</dbReference>
<dbReference type="InterPro" id="IPR000795">
    <property type="entry name" value="T_Tr_GTP-bd_dom"/>
</dbReference>
<dbReference type="InterPro" id="IPR009000">
    <property type="entry name" value="Transl_B-barrel_sf"/>
</dbReference>
<dbReference type="InterPro" id="IPR009001">
    <property type="entry name" value="Transl_elong_EF1A/Init_IF2_C"/>
</dbReference>
<dbReference type="InterPro" id="IPR004541">
    <property type="entry name" value="Transl_elong_EFTu/EF1A_bac/org"/>
</dbReference>
<dbReference type="InterPro" id="IPR004160">
    <property type="entry name" value="Transl_elong_EFTu/EF1A_C"/>
</dbReference>
<dbReference type="NCBIfam" id="TIGR00485">
    <property type="entry name" value="EF-Tu"/>
    <property type="match status" value="1"/>
</dbReference>
<dbReference type="NCBIfam" id="NF000766">
    <property type="entry name" value="PRK00049.1"/>
    <property type="match status" value="1"/>
</dbReference>
<dbReference type="NCBIfam" id="NF009372">
    <property type="entry name" value="PRK12735.1"/>
    <property type="match status" value="1"/>
</dbReference>
<dbReference type="NCBIfam" id="NF009373">
    <property type="entry name" value="PRK12736.1"/>
    <property type="match status" value="1"/>
</dbReference>
<dbReference type="NCBIfam" id="TIGR00231">
    <property type="entry name" value="small_GTP"/>
    <property type="match status" value="1"/>
</dbReference>
<dbReference type="PANTHER" id="PTHR43721:SF22">
    <property type="entry name" value="ELONGATION FACTOR TU, MITOCHONDRIAL"/>
    <property type="match status" value="1"/>
</dbReference>
<dbReference type="PANTHER" id="PTHR43721">
    <property type="entry name" value="ELONGATION FACTOR TU-RELATED"/>
    <property type="match status" value="1"/>
</dbReference>
<dbReference type="Pfam" id="PF00009">
    <property type="entry name" value="GTP_EFTU"/>
    <property type="match status" value="1"/>
</dbReference>
<dbReference type="Pfam" id="PF03144">
    <property type="entry name" value="GTP_EFTU_D2"/>
    <property type="match status" value="1"/>
</dbReference>
<dbReference type="Pfam" id="PF03143">
    <property type="entry name" value="GTP_EFTU_D3"/>
    <property type="match status" value="1"/>
</dbReference>
<dbReference type="PRINTS" id="PR00315">
    <property type="entry name" value="ELONGATNFCT"/>
</dbReference>
<dbReference type="SUPFAM" id="SSF50465">
    <property type="entry name" value="EF-Tu/eEF-1alpha/eIF2-gamma C-terminal domain"/>
    <property type="match status" value="1"/>
</dbReference>
<dbReference type="SUPFAM" id="SSF52540">
    <property type="entry name" value="P-loop containing nucleoside triphosphate hydrolases"/>
    <property type="match status" value="1"/>
</dbReference>
<dbReference type="SUPFAM" id="SSF50447">
    <property type="entry name" value="Translation proteins"/>
    <property type="match status" value="1"/>
</dbReference>
<dbReference type="PROSITE" id="PS00301">
    <property type="entry name" value="G_TR_1"/>
    <property type="match status" value="1"/>
</dbReference>
<dbReference type="PROSITE" id="PS51722">
    <property type="entry name" value="G_TR_2"/>
    <property type="match status" value="1"/>
</dbReference>
<keyword id="KW-0963">Cytoplasm</keyword>
<keyword id="KW-0251">Elongation factor</keyword>
<keyword id="KW-0342">GTP-binding</keyword>
<keyword id="KW-0378">Hydrolase</keyword>
<keyword id="KW-0460">Magnesium</keyword>
<keyword id="KW-0479">Metal-binding</keyword>
<keyword id="KW-0547">Nucleotide-binding</keyword>
<keyword id="KW-0648">Protein biosynthesis</keyword>
<accession>B2RL52</accession>
<gene>
    <name evidence="2" type="primary">tuf</name>
    <name type="ordered locus">PGN_1578</name>
</gene>